<feature type="chain" id="PRO_0000256542" description="Trigger factor">
    <location>
        <begin position="1"/>
        <end position="440"/>
    </location>
</feature>
<feature type="domain" description="PPIase FKBP-type" evidence="1">
    <location>
        <begin position="160"/>
        <end position="253"/>
    </location>
</feature>
<protein>
    <recommendedName>
        <fullName evidence="1">Trigger factor</fullName>
        <shortName evidence="1">TF</shortName>
        <ecNumber evidence="1">5.2.1.8</ecNumber>
    </recommendedName>
    <alternativeName>
        <fullName evidence="1">PPIase</fullName>
    </alternativeName>
</protein>
<gene>
    <name evidence="1" type="primary">tig</name>
    <name type="ordered locus">Cag_0238</name>
</gene>
<comment type="function">
    <text evidence="1">Involved in protein export. Acts as a chaperone by maintaining the newly synthesized protein in an open conformation. Functions as a peptidyl-prolyl cis-trans isomerase.</text>
</comment>
<comment type="catalytic activity">
    <reaction evidence="1">
        <text>[protein]-peptidylproline (omega=180) = [protein]-peptidylproline (omega=0)</text>
        <dbReference type="Rhea" id="RHEA:16237"/>
        <dbReference type="Rhea" id="RHEA-COMP:10747"/>
        <dbReference type="Rhea" id="RHEA-COMP:10748"/>
        <dbReference type="ChEBI" id="CHEBI:83833"/>
        <dbReference type="ChEBI" id="CHEBI:83834"/>
        <dbReference type="EC" id="5.2.1.8"/>
    </reaction>
</comment>
<comment type="subcellular location">
    <subcellularLocation>
        <location>Cytoplasm</location>
    </subcellularLocation>
    <text evidence="1">About half TF is bound to the ribosome near the polypeptide exit tunnel while the other half is free in the cytoplasm.</text>
</comment>
<comment type="domain">
    <text evidence="1">Consists of 3 domains; the N-terminus binds the ribosome, the middle domain has PPIase activity, while the C-terminus has intrinsic chaperone activity on its own.</text>
</comment>
<comment type="similarity">
    <text evidence="1">Belongs to the FKBP-type PPIase family. Tig subfamily.</text>
</comment>
<accession>Q3AU11</accession>
<organism>
    <name type="scientific">Chlorobium chlorochromatii (strain CaD3)</name>
    <dbReference type="NCBI Taxonomy" id="340177"/>
    <lineage>
        <taxon>Bacteria</taxon>
        <taxon>Pseudomonadati</taxon>
        <taxon>Chlorobiota</taxon>
        <taxon>Chlorobiia</taxon>
        <taxon>Chlorobiales</taxon>
        <taxon>Chlorobiaceae</taxon>
        <taxon>Chlorobium/Pelodictyon group</taxon>
        <taxon>Chlorobium</taxon>
    </lineage>
</organism>
<name>TIG_CHLCH</name>
<proteinExistence type="inferred from homology"/>
<keyword id="KW-0131">Cell cycle</keyword>
<keyword id="KW-0132">Cell division</keyword>
<keyword id="KW-0143">Chaperone</keyword>
<keyword id="KW-0963">Cytoplasm</keyword>
<keyword id="KW-0413">Isomerase</keyword>
<keyword id="KW-0697">Rotamase</keyword>
<sequence>MQKTITPLSPTEQELEIILSAEEFGPEYNKELDEAKRTVHIKGFRKGHAPMGLLKKLAGPSIEIAVAEKLGGKYFTDIITAENIKPANRAQIADFAFTDDTLTLKLVYEIHPEFELQDFSGYTFTKANYVVGDKEVEREIELILKSHGTMVTSDEPASEKDTVIGDALRFNDEGELDEASKVANHHFSMEYLPAENPFRIALLGKKAGDVVEVVNTPIKEDEEGEEATAEDAEAVKPTRFQVTVTEVKRLELPELDDELVKEISQERFDNVADFKADVRLQLEQHFTMKSDNDLLEAISGKMVEENPVPVPNSMVESFQDMLLENAKRQLSGNFPKGFDVTGFRASMRDNAEKHARWMLITQKVAEMNKLTVTDEDIVAFAEKEAGKNEALDIKQIIETYKSPDFHDYIADSIMKEKVYNAITEKVTVTEEETPVPEHRM</sequence>
<reference key="1">
    <citation type="submission" date="2005-08" db="EMBL/GenBank/DDBJ databases">
        <title>Complete sequence of Chlorobium chlorochromatii CaD3.</title>
        <authorList>
            <consortium name="US DOE Joint Genome Institute"/>
            <person name="Copeland A."/>
            <person name="Lucas S."/>
            <person name="Lapidus A."/>
            <person name="Barry K."/>
            <person name="Detter J.C."/>
            <person name="Glavina T."/>
            <person name="Hammon N."/>
            <person name="Israni S."/>
            <person name="Pitluck S."/>
            <person name="Bryant D."/>
            <person name="Schmutz J."/>
            <person name="Larimer F."/>
            <person name="Land M."/>
            <person name="Kyrpides N."/>
            <person name="Ivanova N."/>
            <person name="Richardson P."/>
        </authorList>
    </citation>
    <scope>NUCLEOTIDE SEQUENCE [LARGE SCALE GENOMIC DNA]</scope>
    <source>
        <strain>CaD3</strain>
    </source>
</reference>
<evidence type="ECO:0000255" key="1">
    <source>
        <dbReference type="HAMAP-Rule" id="MF_00303"/>
    </source>
</evidence>
<dbReference type="EC" id="5.2.1.8" evidence="1"/>
<dbReference type="EMBL" id="CP000108">
    <property type="protein sequence ID" value="ABB27514.1"/>
    <property type="molecule type" value="Genomic_DNA"/>
</dbReference>
<dbReference type="SMR" id="Q3AU11"/>
<dbReference type="STRING" id="340177.Cag_0238"/>
<dbReference type="KEGG" id="cch:Cag_0238"/>
<dbReference type="eggNOG" id="COG0544">
    <property type="taxonomic scope" value="Bacteria"/>
</dbReference>
<dbReference type="HOGENOM" id="CLU_033058_3_0_10"/>
<dbReference type="OrthoDB" id="9767721at2"/>
<dbReference type="GO" id="GO:0005737">
    <property type="term" value="C:cytoplasm"/>
    <property type="evidence" value="ECO:0007669"/>
    <property type="project" value="UniProtKB-SubCell"/>
</dbReference>
<dbReference type="GO" id="GO:0003755">
    <property type="term" value="F:peptidyl-prolyl cis-trans isomerase activity"/>
    <property type="evidence" value="ECO:0007669"/>
    <property type="project" value="UniProtKB-UniRule"/>
</dbReference>
<dbReference type="GO" id="GO:0051301">
    <property type="term" value="P:cell division"/>
    <property type="evidence" value="ECO:0007669"/>
    <property type="project" value="UniProtKB-KW"/>
</dbReference>
<dbReference type="GO" id="GO:0006457">
    <property type="term" value="P:protein folding"/>
    <property type="evidence" value="ECO:0007669"/>
    <property type="project" value="UniProtKB-UniRule"/>
</dbReference>
<dbReference type="GO" id="GO:0015031">
    <property type="term" value="P:protein transport"/>
    <property type="evidence" value="ECO:0007669"/>
    <property type="project" value="UniProtKB-UniRule"/>
</dbReference>
<dbReference type="Gene3D" id="3.10.50.40">
    <property type="match status" value="1"/>
</dbReference>
<dbReference type="Gene3D" id="3.30.70.1050">
    <property type="entry name" value="Trigger factor ribosome-binding domain"/>
    <property type="match status" value="1"/>
</dbReference>
<dbReference type="Gene3D" id="1.10.3120.10">
    <property type="entry name" value="Trigger factor, C-terminal domain"/>
    <property type="match status" value="1"/>
</dbReference>
<dbReference type="HAMAP" id="MF_00303">
    <property type="entry name" value="Trigger_factor_Tig"/>
    <property type="match status" value="1"/>
</dbReference>
<dbReference type="InterPro" id="IPR046357">
    <property type="entry name" value="PPIase_dom_sf"/>
</dbReference>
<dbReference type="InterPro" id="IPR005215">
    <property type="entry name" value="Trig_fac"/>
</dbReference>
<dbReference type="InterPro" id="IPR008880">
    <property type="entry name" value="Trigger_fac_C"/>
</dbReference>
<dbReference type="InterPro" id="IPR037041">
    <property type="entry name" value="Trigger_fac_C_sf"/>
</dbReference>
<dbReference type="InterPro" id="IPR008881">
    <property type="entry name" value="Trigger_fac_ribosome-bd_bac"/>
</dbReference>
<dbReference type="InterPro" id="IPR036611">
    <property type="entry name" value="Trigger_fac_ribosome-bd_sf"/>
</dbReference>
<dbReference type="InterPro" id="IPR027304">
    <property type="entry name" value="Trigger_fact/SurA_dom_sf"/>
</dbReference>
<dbReference type="NCBIfam" id="TIGR00115">
    <property type="entry name" value="tig"/>
    <property type="match status" value="1"/>
</dbReference>
<dbReference type="Pfam" id="PF05698">
    <property type="entry name" value="Trigger_C"/>
    <property type="match status" value="1"/>
</dbReference>
<dbReference type="Pfam" id="PF05697">
    <property type="entry name" value="Trigger_N"/>
    <property type="match status" value="1"/>
</dbReference>
<dbReference type="PIRSF" id="PIRSF003095">
    <property type="entry name" value="Trigger_factor"/>
    <property type="match status" value="1"/>
</dbReference>
<dbReference type="SUPFAM" id="SSF54534">
    <property type="entry name" value="FKBP-like"/>
    <property type="match status" value="1"/>
</dbReference>
<dbReference type="SUPFAM" id="SSF109998">
    <property type="entry name" value="Triger factor/SurA peptide-binding domain-like"/>
    <property type="match status" value="1"/>
</dbReference>
<dbReference type="SUPFAM" id="SSF102735">
    <property type="entry name" value="Trigger factor ribosome-binding domain"/>
    <property type="match status" value="1"/>
</dbReference>